<keyword id="KW-0687">Ribonucleoprotein</keyword>
<keyword id="KW-0689">Ribosomal protein</keyword>
<evidence type="ECO:0000255" key="1">
    <source>
        <dbReference type="HAMAP-Rule" id="MF_00391"/>
    </source>
</evidence>
<evidence type="ECO:0000256" key="2">
    <source>
        <dbReference type="SAM" id="MobiDB-lite"/>
    </source>
</evidence>
<evidence type="ECO:0000305" key="3"/>
<proteinExistence type="inferred from homology"/>
<feature type="chain" id="PRO_1000013431" description="Large ribosomal subunit protein bL34">
    <location>
        <begin position="1"/>
        <end position="44"/>
    </location>
</feature>
<feature type="region of interest" description="Disordered" evidence="2">
    <location>
        <begin position="1"/>
        <end position="44"/>
    </location>
</feature>
<feature type="compositionally biased region" description="Basic residues" evidence="2">
    <location>
        <begin position="30"/>
        <end position="44"/>
    </location>
</feature>
<gene>
    <name evidence="1" type="primary">rpmH</name>
    <name type="ordered locus">A1E_01740</name>
</gene>
<protein>
    <recommendedName>
        <fullName evidence="1">Large ribosomal subunit protein bL34</fullName>
    </recommendedName>
    <alternativeName>
        <fullName evidence="3">50S ribosomal protein L34</fullName>
    </alternativeName>
</protein>
<reference key="1">
    <citation type="submission" date="2007-09" db="EMBL/GenBank/DDBJ databases">
        <title>Complete genome sequence of Rickettsia canadensis.</title>
        <authorList>
            <person name="Madan A."/>
            <person name="Fahey J."/>
            <person name="Helton E."/>
            <person name="Ketteman M."/>
            <person name="Madan A."/>
            <person name="Rodrigues S."/>
            <person name="Sanchez A."/>
            <person name="Whiting M."/>
            <person name="Dasch G."/>
            <person name="Eremeeva M."/>
        </authorList>
    </citation>
    <scope>NUCLEOTIDE SEQUENCE [LARGE SCALE GENOMIC DNA]</scope>
    <source>
        <strain>McKiel</strain>
    </source>
</reference>
<sequence length="44" mass="5214">MKRTFQPSNLVRKRRHGFRARMATPSGRAILRRRRAKGRHKLSA</sequence>
<dbReference type="EMBL" id="CP000409">
    <property type="protein sequence ID" value="ABV73293.1"/>
    <property type="molecule type" value="Genomic_DNA"/>
</dbReference>
<dbReference type="RefSeq" id="WP_012148492.1">
    <property type="nucleotide sequence ID" value="NC_009879.1"/>
</dbReference>
<dbReference type="SMR" id="A8EY60"/>
<dbReference type="STRING" id="293613.A1E_01740"/>
<dbReference type="KEGG" id="rcm:A1E_01740"/>
<dbReference type="eggNOG" id="COG0230">
    <property type="taxonomic scope" value="Bacteria"/>
</dbReference>
<dbReference type="HOGENOM" id="CLU_129938_2_0_5"/>
<dbReference type="Proteomes" id="UP000007056">
    <property type="component" value="Chromosome"/>
</dbReference>
<dbReference type="GO" id="GO:1990904">
    <property type="term" value="C:ribonucleoprotein complex"/>
    <property type="evidence" value="ECO:0007669"/>
    <property type="project" value="UniProtKB-KW"/>
</dbReference>
<dbReference type="GO" id="GO:0005840">
    <property type="term" value="C:ribosome"/>
    <property type="evidence" value="ECO:0007669"/>
    <property type="project" value="UniProtKB-KW"/>
</dbReference>
<dbReference type="GO" id="GO:0003735">
    <property type="term" value="F:structural constituent of ribosome"/>
    <property type="evidence" value="ECO:0007669"/>
    <property type="project" value="InterPro"/>
</dbReference>
<dbReference type="GO" id="GO:0006412">
    <property type="term" value="P:translation"/>
    <property type="evidence" value="ECO:0007669"/>
    <property type="project" value="UniProtKB-UniRule"/>
</dbReference>
<dbReference type="FunFam" id="1.10.287.3980:FF:000001">
    <property type="entry name" value="Mitochondrial ribosomal protein L34"/>
    <property type="match status" value="1"/>
</dbReference>
<dbReference type="Gene3D" id="1.10.287.3980">
    <property type="match status" value="1"/>
</dbReference>
<dbReference type="HAMAP" id="MF_00391">
    <property type="entry name" value="Ribosomal_bL34"/>
    <property type="match status" value="1"/>
</dbReference>
<dbReference type="InterPro" id="IPR000271">
    <property type="entry name" value="Ribosomal_bL34"/>
</dbReference>
<dbReference type="InterPro" id="IPR020939">
    <property type="entry name" value="Ribosomal_bL34_CS"/>
</dbReference>
<dbReference type="NCBIfam" id="TIGR01030">
    <property type="entry name" value="rpmH_bact"/>
    <property type="match status" value="1"/>
</dbReference>
<dbReference type="PANTHER" id="PTHR14503:SF4">
    <property type="entry name" value="LARGE RIBOSOMAL SUBUNIT PROTEIN BL34M"/>
    <property type="match status" value="1"/>
</dbReference>
<dbReference type="PANTHER" id="PTHR14503">
    <property type="entry name" value="MITOCHONDRIAL RIBOSOMAL PROTEIN 34 FAMILY MEMBER"/>
    <property type="match status" value="1"/>
</dbReference>
<dbReference type="Pfam" id="PF00468">
    <property type="entry name" value="Ribosomal_L34"/>
    <property type="match status" value="1"/>
</dbReference>
<dbReference type="PROSITE" id="PS00784">
    <property type="entry name" value="RIBOSOMAL_L34"/>
    <property type="match status" value="1"/>
</dbReference>
<comment type="similarity">
    <text evidence="1">Belongs to the bacterial ribosomal protein bL34 family.</text>
</comment>
<accession>A8EY60</accession>
<organism>
    <name type="scientific">Rickettsia canadensis (strain McKiel)</name>
    <dbReference type="NCBI Taxonomy" id="293613"/>
    <lineage>
        <taxon>Bacteria</taxon>
        <taxon>Pseudomonadati</taxon>
        <taxon>Pseudomonadota</taxon>
        <taxon>Alphaproteobacteria</taxon>
        <taxon>Rickettsiales</taxon>
        <taxon>Rickettsiaceae</taxon>
        <taxon>Rickettsieae</taxon>
        <taxon>Rickettsia</taxon>
        <taxon>belli group</taxon>
    </lineage>
</organism>
<name>RL34_RICCK</name>